<keyword id="KW-0032">Aminotransferase</keyword>
<keyword id="KW-0963">Cytoplasm</keyword>
<keyword id="KW-0663">Pyridoxal phosphate</keyword>
<keyword id="KW-1185">Reference proteome</keyword>
<keyword id="KW-0808">Transferase</keyword>
<name>GABAT_MYCMD</name>
<proteinExistence type="evidence at transcript level"/>
<accession>P49604</accession>
<accession>A0A0D1E6G7</accession>
<accession>Q4PFN3</accession>
<protein>
    <recommendedName>
        <fullName>4-aminobutyrate aminotransferase</fullName>
        <ecNumber>2.6.1.19</ecNumber>
    </recommendedName>
    <alternativeName>
        <fullName>GABA aminotransferase</fullName>
        <shortName>GABA-AT</shortName>
    </alternativeName>
    <alternativeName>
        <fullName>Gamma-amino-N-butyrate transaminase</fullName>
        <shortName>GABA transaminase</shortName>
    </alternativeName>
</protein>
<organism>
    <name type="scientific">Mycosarcoma maydis</name>
    <name type="common">Corn smut fungus</name>
    <name type="synonym">Ustilago maydis</name>
    <dbReference type="NCBI Taxonomy" id="5270"/>
    <lineage>
        <taxon>Eukaryota</taxon>
        <taxon>Fungi</taxon>
        <taxon>Dikarya</taxon>
        <taxon>Basidiomycota</taxon>
        <taxon>Ustilaginomycotina</taxon>
        <taxon>Ustilaginomycetes</taxon>
        <taxon>Ustilaginales</taxon>
        <taxon>Ustilaginaceae</taxon>
        <taxon>Mycosarcoma</taxon>
    </lineage>
</organism>
<evidence type="ECO:0000250" key="1"/>
<evidence type="ECO:0000250" key="2">
    <source>
        <dbReference type="UniProtKB" id="O13837"/>
    </source>
</evidence>
<evidence type="ECO:0000250" key="3">
    <source>
        <dbReference type="UniProtKB" id="P17649"/>
    </source>
</evidence>
<evidence type="ECO:0000250" key="4">
    <source>
        <dbReference type="UniProtKB" id="P80147"/>
    </source>
</evidence>
<evidence type="ECO:0000269" key="5">
    <source>
    </source>
</evidence>
<evidence type="ECO:0000305" key="6"/>
<dbReference type="EC" id="2.6.1.19"/>
<dbReference type="EMBL" id="U28655">
    <property type="protein sequence ID" value="AAA98560.1"/>
    <property type="molecule type" value="Genomic_DNA"/>
</dbReference>
<dbReference type="EMBL" id="CM003141">
    <property type="protein sequence ID" value="KIS71171.1"/>
    <property type="molecule type" value="Genomic_DNA"/>
</dbReference>
<dbReference type="PIR" id="S68116">
    <property type="entry name" value="S68116"/>
</dbReference>
<dbReference type="RefSeq" id="XP_011387041.1">
    <property type="nucleotide sequence ID" value="XM_011388739.1"/>
</dbReference>
<dbReference type="SMR" id="P49604"/>
<dbReference type="FunCoup" id="P49604">
    <property type="interactions" value="196"/>
</dbReference>
<dbReference type="STRING" id="237631.P49604"/>
<dbReference type="EnsemblFungi" id="KIS71171">
    <property type="protein sequence ID" value="KIS71171"/>
    <property type="gene ID" value="UMAG_01080"/>
</dbReference>
<dbReference type="GeneID" id="23562197"/>
<dbReference type="KEGG" id="uma:UMAG_01080"/>
<dbReference type="VEuPathDB" id="FungiDB:UMAG_01080"/>
<dbReference type="eggNOG" id="KOG1405">
    <property type="taxonomic scope" value="Eukaryota"/>
</dbReference>
<dbReference type="HOGENOM" id="CLU_016922_12_0_1"/>
<dbReference type="InParanoid" id="P49604"/>
<dbReference type="OMA" id="GLMCAFD"/>
<dbReference type="OrthoDB" id="10260828at2759"/>
<dbReference type="Proteomes" id="UP000000561">
    <property type="component" value="Chromosome 2"/>
</dbReference>
<dbReference type="GO" id="GO:0005829">
    <property type="term" value="C:cytosol"/>
    <property type="evidence" value="ECO:0007669"/>
    <property type="project" value="EnsemblFungi"/>
</dbReference>
<dbReference type="GO" id="GO:0005739">
    <property type="term" value="C:mitochondrion"/>
    <property type="evidence" value="ECO:0000318"/>
    <property type="project" value="GO_Central"/>
</dbReference>
<dbReference type="GO" id="GO:0034386">
    <property type="term" value="F:4-aminobutyrate:2-oxoglutarate transaminase activity"/>
    <property type="evidence" value="ECO:0007669"/>
    <property type="project" value="UniProtKB-EC"/>
</dbReference>
<dbReference type="GO" id="GO:0030170">
    <property type="term" value="F:pyridoxal phosphate binding"/>
    <property type="evidence" value="ECO:0000318"/>
    <property type="project" value="GO_Central"/>
</dbReference>
<dbReference type="GO" id="GO:0009450">
    <property type="term" value="P:gamma-aminobutyric acid catabolic process"/>
    <property type="evidence" value="ECO:0000318"/>
    <property type="project" value="GO_Central"/>
</dbReference>
<dbReference type="CDD" id="cd00610">
    <property type="entry name" value="OAT_like"/>
    <property type="match status" value="1"/>
</dbReference>
<dbReference type="FunFam" id="3.40.640.10:FF:000073">
    <property type="entry name" value="Probable 4-aminobutyrate aminotransferase"/>
    <property type="match status" value="1"/>
</dbReference>
<dbReference type="Gene3D" id="3.90.1150.10">
    <property type="entry name" value="Aspartate Aminotransferase, domain 1"/>
    <property type="match status" value="1"/>
</dbReference>
<dbReference type="Gene3D" id="3.40.640.10">
    <property type="entry name" value="Type I PLP-dependent aspartate aminotransferase-like (Major domain)"/>
    <property type="match status" value="1"/>
</dbReference>
<dbReference type="InterPro" id="IPR004631">
    <property type="entry name" value="4NH2But_aminotransferase_euk"/>
</dbReference>
<dbReference type="InterPro" id="IPR005814">
    <property type="entry name" value="Aminotrans_3"/>
</dbReference>
<dbReference type="InterPro" id="IPR049704">
    <property type="entry name" value="Aminotrans_3_PPA_site"/>
</dbReference>
<dbReference type="InterPro" id="IPR015424">
    <property type="entry name" value="PyrdxlP-dep_Trfase"/>
</dbReference>
<dbReference type="InterPro" id="IPR015421">
    <property type="entry name" value="PyrdxlP-dep_Trfase_major"/>
</dbReference>
<dbReference type="InterPro" id="IPR015422">
    <property type="entry name" value="PyrdxlP-dep_Trfase_small"/>
</dbReference>
<dbReference type="NCBIfam" id="TIGR00699">
    <property type="entry name" value="GABAtrns_euk"/>
    <property type="match status" value="1"/>
</dbReference>
<dbReference type="PANTHER" id="PTHR43206:SF1">
    <property type="entry name" value="4-AMINOBUTYRATE AMINOTRANSFERASE, MITOCHONDRIAL"/>
    <property type="match status" value="1"/>
</dbReference>
<dbReference type="PANTHER" id="PTHR43206">
    <property type="entry name" value="AMINOTRANSFERASE"/>
    <property type="match status" value="1"/>
</dbReference>
<dbReference type="Pfam" id="PF00202">
    <property type="entry name" value="Aminotran_3"/>
    <property type="match status" value="1"/>
</dbReference>
<dbReference type="PIRSF" id="PIRSF000521">
    <property type="entry name" value="Transaminase_4ab_Lys_Orn"/>
    <property type="match status" value="1"/>
</dbReference>
<dbReference type="SUPFAM" id="SSF53383">
    <property type="entry name" value="PLP-dependent transferases"/>
    <property type="match status" value="1"/>
</dbReference>
<dbReference type="PROSITE" id="PS00600">
    <property type="entry name" value="AA_TRANSFER_CLASS_3"/>
    <property type="match status" value="1"/>
</dbReference>
<reference key="1">
    <citation type="journal article" date="1996" name="Curr. Genet.">
        <title>Characterization of the ugatA gene of Ustilago maydis, isolated by homology to the gatA gene of Aspergillus nidulans.</title>
        <authorList>
            <person name="Straffon M.J."/>
            <person name="Hynes M.J."/>
            <person name="Davis M.A."/>
        </authorList>
    </citation>
    <scope>NUCLEOTIDE SEQUENCE [GENOMIC DNA]</scope>
    <scope>FUNCTION</scope>
    <scope>INDUCTION</scope>
    <source>
        <strain>518</strain>
    </source>
</reference>
<reference key="2">
    <citation type="journal article" date="2006" name="Nature">
        <title>Insights from the genome of the biotrophic fungal plant pathogen Ustilago maydis.</title>
        <authorList>
            <person name="Kaemper J."/>
            <person name="Kahmann R."/>
            <person name="Boelker M."/>
            <person name="Ma L.-J."/>
            <person name="Brefort T."/>
            <person name="Saville B.J."/>
            <person name="Banuett F."/>
            <person name="Kronstad J.W."/>
            <person name="Gold S.E."/>
            <person name="Mueller O."/>
            <person name="Perlin M.H."/>
            <person name="Woesten H.A.B."/>
            <person name="de Vries R."/>
            <person name="Ruiz-Herrera J."/>
            <person name="Reynaga-Pena C.G."/>
            <person name="Snetselaar K."/>
            <person name="McCann M."/>
            <person name="Perez-Martin J."/>
            <person name="Feldbruegge M."/>
            <person name="Basse C.W."/>
            <person name="Steinberg G."/>
            <person name="Ibeas J.I."/>
            <person name="Holloman W."/>
            <person name="Guzman P."/>
            <person name="Farman M.L."/>
            <person name="Stajich J.E."/>
            <person name="Sentandreu R."/>
            <person name="Gonzalez-Prieto J.M."/>
            <person name="Kennell J.C."/>
            <person name="Molina L."/>
            <person name="Schirawski J."/>
            <person name="Mendoza-Mendoza A."/>
            <person name="Greilinger D."/>
            <person name="Muench K."/>
            <person name="Roessel N."/>
            <person name="Scherer M."/>
            <person name="Vranes M."/>
            <person name="Ladendorf O."/>
            <person name="Vincon V."/>
            <person name="Fuchs U."/>
            <person name="Sandrock B."/>
            <person name="Meng S."/>
            <person name="Ho E.C.H."/>
            <person name="Cahill M.J."/>
            <person name="Boyce K.J."/>
            <person name="Klose J."/>
            <person name="Klosterman S.J."/>
            <person name="Deelstra H.J."/>
            <person name="Ortiz-Castellanos L."/>
            <person name="Li W."/>
            <person name="Sanchez-Alonso P."/>
            <person name="Schreier P.H."/>
            <person name="Haeuser-Hahn I."/>
            <person name="Vaupel M."/>
            <person name="Koopmann E."/>
            <person name="Friedrich G."/>
            <person name="Voss H."/>
            <person name="Schlueter T."/>
            <person name="Margolis J."/>
            <person name="Platt D."/>
            <person name="Swimmer C."/>
            <person name="Gnirke A."/>
            <person name="Chen F."/>
            <person name="Vysotskaia V."/>
            <person name="Mannhaupt G."/>
            <person name="Gueldener U."/>
            <person name="Muensterkoetter M."/>
            <person name="Haase D."/>
            <person name="Oesterheld M."/>
            <person name="Mewes H.-W."/>
            <person name="Mauceli E.W."/>
            <person name="DeCaprio D."/>
            <person name="Wade C.M."/>
            <person name="Butler J."/>
            <person name="Young S.K."/>
            <person name="Jaffe D.B."/>
            <person name="Calvo S.E."/>
            <person name="Nusbaum C."/>
            <person name="Galagan J.E."/>
            <person name="Birren B.W."/>
        </authorList>
    </citation>
    <scope>NUCLEOTIDE SEQUENCE [LARGE SCALE GENOMIC DNA]</scope>
    <source>
        <strain>DSM 14603 / FGSC 9021 / UM521</strain>
    </source>
</reference>
<reference key="3">
    <citation type="submission" date="2014-09" db="EMBL/GenBank/DDBJ databases">
        <authorList>
            <person name="Gueldener U."/>
            <person name="Muensterkoetter M."/>
            <person name="Walter M.C."/>
            <person name="Mannhaupt G."/>
            <person name="Kahmann R."/>
        </authorList>
    </citation>
    <scope>GENOME REANNOTATION</scope>
    <source>
        <strain>DSM 14603 / FGSC 9021 / UM521</strain>
    </source>
</reference>
<sequence>MISSKATSAARACARTSRVMQQQQRRLLATVVSSSSLFPGEPSSPHVVTSQIPGPKSKELSDRIGTFQENRTHGFVVDYAKSQGNWIADADGNVLLDMFAQIASIAIGYNNPDLLALAKTDEFITATMNRAALGSFPPTNWQELVETSFGTVKPDGLNNIFTAMCGSCANENAFKASFMAYRARERGEKAEFTPEEMSSCMKNQSPGSPDLSILSFTSAFHGRLFGSLSATRSKAIHKLDIPSFNWPVVEWPDVKYPFAQNSRENAEAEKVALAAVEEAIVSSKKTGSSYGPVAALIVEPIQSEGGDNHASPAFFQGLRDVTKKHGVFMIVDEVQTGVGATGAFWAHSKWNLTSPPDFVTFSKKMQAAGFYHNIETRPSLPYRNYNTWMGDPARTLQARQIIRTIQDHNLIQKTDKVGNYIYEKLFDLIENGAGRGKIEKLRGENAGTFLAFDGRTAKVRDQLIMEMRKLGVHMGGCGDKALRLRPMLVFEQKHADIFLDKLETALGQL</sequence>
<comment type="function">
    <text evidence="1 5">Deaminates gamma-aminobutyric acid (GABA) to succinate-semialdehyde, which in turn is converted to succinate by the succinate semialdehyde dehydrogenase (By similarity). Not required for the utilization of GABA as nitrogen source.</text>
</comment>
<comment type="catalytic activity">
    <reaction>
        <text>4-aminobutanoate + 2-oxoglutarate = succinate semialdehyde + L-glutamate</text>
        <dbReference type="Rhea" id="RHEA:23352"/>
        <dbReference type="ChEBI" id="CHEBI:16810"/>
        <dbReference type="ChEBI" id="CHEBI:29985"/>
        <dbReference type="ChEBI" id="CHEBI:57706"/>
        <dbReference type="ChEBI" id="CHEBI:59888"/>
        <dbReference type="EC" id="2.6.1.19"/>
    </reaction>
</comment>
<comment type="cofactor">
    <cofactor evidence="3">
        <name>pyridoxal 5'-phosphate</name>
        <dbReference type="ChEBI" id="CHEBI:597326"/>
    </cofactor>
</comment>
<comment type="subunit">
    <text evidence="2">Homodimer.</text>
</comment>
<comment type="subcellular location">
    <subcellularLocation>
        <location evidence="1">Cytoplasm</location>
    </subcellularLocation>
</comment>
<comment type="induction">
    <text evidence="5">Up-regulated by GABA and beta-alanine. Is not subject to nitrogen catabolite repression.</text>
</comment>
<comment type="similarity">
    <text evidence="6">Belongs to the class-III pyridoxal-phosphate-dependent aminotransferase family.</text>
</comment>
<feature type="chain" id="PRO_0000120381" description="4-aminobutyrate aminotransferase">
    <location>
        <begin position="1"/>
        <end position="509"/>
    </location>
</feature>
<feature type="binding site" description="in other chain" evidence="4">
    <location>
        <begin position="166"/>
        <end position="167"/>
    </location>
    <ligand>
        <name>pyridoxal 5'-phosphate</name>
        <dbReference type="ChEBI" id="CHEBI:597326"/>
        <note>ligand shared between dimeric partners</note>
    </ligand>
</feature>
<feature type="binding site" evidence="4">
    <location>
        <position position="223"/>
    </location>
    <ligand>
        <name>substrate</name>
    </ligand>
</feature>
<feature type="binding site" evidence="4">
    <location>
        <position position="387"/>
    </location>
    <ligand>
        <name>pyridoxal 5'-phosphate</name>
        <dbReference type="ChEBI" id="CHEBI:597326"/>
        <note>ligand shared between dimeric partners</note>
    </ligand>
</feature>
<feature type="modified residue" description="N6-(pyridoxal phosphate)lysine" evidence="4">
    <location>
        <position position="363"/>
    </location>
</feature>
<feature type="sequence conflict" description="In Ref. 1; AAA98560." evidence="6" ref="1">
    <original>G</original>
    <variation>GT</variation>
    <location>
        <position position="337"/>
    </location>
</feature>
<gene>
    <name type="primary">GATA</name>
    <name type="ORF">UMAG_01080</name>
</gene>